<keyword id="KW-0010">Activator</keyword>
<keyword id="KW-0963">Cytoplasm</keyword>
<keyword id="KW-0678">Repressor</keyword>
<keyword id="KW-0694">RNA-binding</keyword>
<keyword id="KW-0810">Translation regulation</keyword>
<protein>
    <recommendedName>
        <fullName evidence="1">Translational regulator CsrA</fullName>
    </recommendedName>
    <alternativeName>
        <fullName evidence="1">Carbon storage regulator</fullName>
    </alternativeName>
</protein>
<accession>A6WR14</accession>
<dbReference type="EMBL" id="CP000753">
    <property type="protein sequence ID" value="ABS09253.1"/>
    <property type="molecule type" value="Genomic_DNA"/>
</dbReference>
<dbReference type="RefSeq" id="WP_006082602.1">
    <property type="nucleotide sequence ID" value="NC_009665.1"/>
</dbReference>
<dbReference type="SMR" id="A6WR14"/>
<dbReference type="GeneID" id="94727129"/>
<dbReference type="KEGG" id="sbm:Shew185_3122"/>
<dbReference type="HOGENOM" id="CLU_164837_2_2_6"/>
<dbReference type="GO" id="GO:0005829">
    <property type="term" value="C:cytosol"/>
    <property type="evidence" value="ECO:0007669"/>
    <property type="project" value="TreeGrafter"/>
</dbReference>
<dbReference type="GO" id="GO:0048027">
    <property type="term" value="F:mRNA 5'-UTR binding"/>
    <property type="evidence" value="ECO:0007669"/>
    <property type="project" value="UniProtKB-UniRule"/>
</dbReference>
<dbReference type="GO" id="GO:0006402">
    <property type="term" value="P:mRNA catabolic process"/>
    <property type="evidence" value="ECO:0007669"/>
    <property type="project" value="InterPro"/>
</dbReference>
<dbReference type="GO" id="GO:0045947">
    <property type="term" value="P:negative regulation of translational initiation"/>
    <property type="evidence" value="ECO:0007669"/>
    <property type="project" value="UniProtKB-UniRule"/>
</dbReference>
<dbReference type="GO" id="GO:0045948">
    <property type="term" value="P:positive regulation of translational initiation"/>
    <property type="evidence" value="ECO:0007669"/>
    <property type="project" value="UniProtKB-UniRule"/>
</dbReference>
<dbReference type="GO" id="GO:0006109">
    <property type="term" value="P:regulation of carbohydrate metabolic process"/>
    <property type="evidence" value="ECO:0007669"/>
    <property type="project" value="UniProtKB-UniRule"/>
</dbReference>
<dbReference type="FunFam" id="2.60.40.4380:FF:000001">
    <property type="entry name" value="Translational regulator CsrA"/>
    <property type="match status" value="1"/>
</dbReference>
<dbReference type="Gene3D" id="2.60.40.4380">
    <property type="entry name" value="Translational regulator CsrA"/>
    <property type="match status" value="1"/>
</dbReference>
<dbReference type="HAMAP" id="MF_00167">
    <property type="entry name" value="CsrA"/>
    <property type="match status" value="1"/>
</dbReference>
<dbReference type="InterPro" id="IPR003751">
    <property type="entry name" value="CsrA"/>
</dbReference>
<dbReference type="InterPro" id="IPR036107">
    <property type="entry name" value="CsrA_sf"/>
</dbReference>
<dbReference type="NCBIfam" id="TIGR00202">
    <property type="entry name" value="csrA"/>
    <property type="match status" value="1"/>
</dbReference>
<dbReference type="NCBIfam" id="NF002469">
    <property type="entry name" value="PRK01712.1"/>
    <property type="match status" value="1"/>
</dbReference>
<dbReference type="PANTHER" id="PTHR34984">
    <property type="entry name" value="CARBON STORAGE REGULATOR"/>
    <property type="match status" value="1"/>
</dbReference>
<dbReference type="PANTHER" id="PTHR34984:SF1">
    <property type="entry name" value="CARBON STORAGE REGULATOR"/>
    <property type="match status" value="1"/>
</dbReference>
<dbReference type="Pfam" id="PF02599">
    <property type="entry name" value="CsrA"/>
    <property type="match status" value="1"/>
</dbReference>
<dbReference type="SUPFAM" id="SSF117130">
    <property type="entry name" value="CsrA-like"/>
    <property type="match status" value="1"/>
</dbReference>
<comment type="function">
    <text evidence="1">A key translational regulator that binds mRNA to regulate translation initiation and/or mRNA stability. Mediates global changes in gene expression, shifting from rapid growth to stress survival by linking envelope stress, the stringent response and the catabolite repression systems. Usually binds in the 5'-UTR; binding at or near the Shine-Dalgarno sequence prevents ribosome-binding, repressing translation, binding elsewhere in the 5'-UTR can activate translation and/or stabilize the mRNA. Its function is antagonized by small RNA(s).</text>
</comment>
<comment type="subunit">
    <text evidence="1">Homodimer; the beta-strands of each monomer intercalate to form a hydrophobic core, while the alpha-helices form wings that extend away from the core.</text>
</comment>
<comment type="subcellular location">
    <subcellularLocation>
        <location evidence="1">Cytoplasm</location>
    </subcellularLocation>
</comment>
<comment type="similarity">
    <text evidence="1">Belongs to the CsrA/RsmA family.</text>
</comment>
<reference key="1">
    <citation type="submission" date="2007-07" db="EMBL/GenBank/DDBJ databases">
        <title>Complete sequence of chromosome of Shewanella baltica OS185.</title>
        <authorList>
            <consortium name="US DOE Joint Genome Institute"/>
            <person name="Copeland A."/>
            <person name="Lucas S."/>
            <person name="Lapidus A."/>
            <person name="Barry K."/>
            <person name="Glavina del Rio T."/>
            <person name="Dalin E."/>
            <person name="Tice H."/>
            <person name="Pitluck S."/>
            <person name="Sims D."/>
            <person name="Brettin T."/>
            <person name="Bruce D."/>
            <person name="Detter J.C."/>
            <person name="Han C."/>
            <person name="Schmutz J."/>
            <person name="Larimer F."/>
            <person name="Land M."/>
            <person name="Hauser L."/>
            <person name="Kyrpides N."/>
            <person name="Mikhailova N."/>
            <person name="Brettar I."/>
            <person name="Rodrigues J."/>
            <person name="Konstantinidis K."/>
            <person name="Tiedje J."/>
            <person name="Richardson P."/>
        </authorList>
    </citation>
    <scope>NUCLEOTIDE SEQUENCE [LARGE SCALE GENOMIC DNA]</scope>
    <source>
        <strain>OS185</strain>
    </source>
</reference>
<name>CSRA_SHEB8</name>
<sequence length="65" mass="7125">MLILTRRVGETLMIGDEVTVTVLGVKGNQVRIGVNAPKEVSVHREEIYQRIQSEKSGTPSEGGNF</sequence>
<feature type="chain" id="PRO_1000023417" description="Translational regulator CsrA">
    <location>
        <begin position="1"/>
        <end position="65"/>
    </location>
</feature>
<gene>
    <name evidence="1" type="primary">csrA</name>
    <name type="ordered locus">Shew185_3122</name>
</gene>
<organism>
    <name type="scientific">Shewanella baltica (strain OS185)</name>
    <dbReference type="NCBI Taxonomy" id="402882"/>
    <lineage>
        <taxon>Bacteria</taxon>
        <taxon>Pseudomonadati</taxon>
        <taxon>Pseudomonadota</taxon>
        <taxon>Gammaproteobacteria</taxon>
        <taxon>Alteromonadales</taxon>
        <taxon>Shewanellaceae</taxon>
        <taxon>Shewanella</taxon>
    </lineage>
</organism>
<proteinExistence type="inferred from homology"/>
<evidence type="ECO:0000255" key="1">
    <source>
        <dbReference type="HAMAP-Rule" id="MF_00167"/>
    </source>
</evidence>